<feature type="chain" id="PRO_0000138202" description="CTP synthase">
    <location>
        <begin position="1"/>
        <end position="586"/>
    </location>
</feature>
<feature type="domain" description="Glutamine amidotransferase type-1" evidence="2">
    <location>
        <begin position="303"/>
        <end position="551"/>
    </location>
</feature>
<feature type="region of interest" description="Amidoligase domain" evidence="2">
    <location>
        <begin position="1"/>
        <end position="278"/>
    </location>
</feature>
<feature type="region of interest" description="Disordered" evidence="3">
    <location>
        <begin position="560"/>
        <end position="586"/>
    </location>
</feature>
<feature type="active site" description="Nucleophile; for glutamine hydrolysis" evidence="2 4">
    <location>
        <position position="393"/>
    </location>
</feature>
<feature type="active site" evidence="2 6">
    <location>
        <position position="524"/>
    </location>
</feature>
<feature type="active site" evidence="2 6">
    <location>
        <position position="526"/>
    </location>
</feature>
<feature type="binding site" evidence="1 6">
    <location>
        <position position="20"/>
    </location>
    <ligand>
        <name>CTP</name>
        <dbReference type="ChEBI" id="CHEBI:37563"/>
        <note>allosteric inhibitor</note>
    </ligand>
</feature>
<feature type="binding site" evidence="6">
    <location>
        <position position="20"/>
    </location>
    <ligand>
        <name>UTP</name>
        <dbReference type="ChEBI" id="CHEBI:46398"/>
    </ligand>
</feature>
<feature type="binding site" evidence="6">
    <location>
        <begin position="21"/>
        <end position="26"/>
    </location>
    <ligand>
        <name>ATP</name>
        <dbReference type="ChEBI" id="CHEBI:30616"/>
    </ligand>
</feature>
<feature type="binding site" evidence="6">
    <location>
        <position position="46"/>
    </location>
    <ligand>
        <name>ATP</name>
        <dbReference type="ChEBI" id="CHEBI:30616"/>
    </ligand>
</feature>
<feature type="binding site" evidence="6">
    <location>
        <position position="78"/>
    </location>
    <ligand>
        <name>ATP</name>
        <dbReference type="ChEBI" id="CHEBI:30616"/>
    </ligand>
</feature>
<feature type="binding site" evidence="2">
    <location>
        <position position="78"/>
    </location>
    <ligand>
        <name>Mg(2+)</name>
        <dbReference type="ChEBI" id="CHEBI:18420"/>
    </ligand>
</feature>
<feature type="binding site" evidence="2">
    <location>
        <position position="152"/>
    </location>
    <ligand>
        <name>Mg(2+)</name>
        <dbReference type="ChEBI" id="CHEBI:18420"/>
    </ligand>
</feature>
<feature type="binding site" evidence="1 6">
    <location>
        <begin position="159"/>
        <end position="161"/>
    </location>
    <ligand>
        <name>CTP</name>
        <dbReference type="ChEBI" id="CHEBI:37563"/>
        <note>allosteric inhibitor</note>
    </ligand>
</feature>
<feature type="binding site" evidence="2">
    <location>
        <begin position="199"/>
        <end position="204"/>
    </location>
    <ligand>
        <name>CTP</name>
        <dbReference type="ChEBI" id="CHEBI:37563"/>
        <note>allosteric inhibitor</note>
    </ligand>
</feature>
<feature type="binding site" evidence="2">
    <location>
        <begin position="199"/>
        <end position="204"/>
    </location>
    <ligand>
        <name>UTP</name>
        <dbReference type="ChEBI" id="CHEBI:46398"/>
    </ligand>
</feature>
<feature type="binding site" evidence="2">
    <location>
        <position position="235"/>
    </location>
    <ligand>
        <name>CTP</name>
        <dbReference type="ChEBI" id="CHEBI:37563"/>
        <note>allosteric inhibitor</note>
    </ligand>
</feature>
<feature type="binding site" evidence="2">
    <location>
        <position position="235"/>
    </location>
    <ligand>
        <name>UTP</name>
        <dbReference type="ChEBI" id="CHEBI:46398"/>
    </ligand>
</feature>
<feature type="binding site" evidence="6">
    <location>
        <position position="253"/>
    </location>
    <ligand>
        <name>ATP</name>
        <dbReference type="ChEBI" id="CHEBI:30616"/>
    </ligand>
</feature>
<feature type="binding site" evidence="2">
    <location>
        <position position="366"/>
    </location>
    <ligand>
        <name>L-glutamine</name>
        <dbReference type="ChEBI" id="CHEBI:58359"/>
    </ligand>
</feature>
<feature type="binding site" evidence="2">
    <location>
        <begin position="394"/>
        <end position="397"/>
    </location>
    <ligand>
        <name>L-glutamine</name>
        <dbReference type="ChEBI" id="CHEBI:58359"/>
    </ligand>
</feature>
<feature type="binding site" evidence="2">
    <location>
        <position position="416"/>
    </location>
    <ligand>
        <name>L-glutamine</name>
        <dbReference type="ChEBI" id="CHEBI:58359"/>
    </ligand>
</feature>
<feature type="binding site" evidence="2">
    <location>
        <position position="477"/>
    </location>
    <ligand>
        <name>L-glutamine</name>
        <dbReference type="ChEBI" id="CHEBI:58359"/>
    </ligand>
</feature>
<feature type="mutagenesis site" description="14-fold reduction in catalytic activity. 10-fold decrease in affinity for ATP but no change in affinity for UTP. Causes resistance to the anti-tubercular compounds 7947882 and 7904688. Catalytic activity cannot be inhibited by the active metabolite of 7947882." evidence="4">
    <original>V</original>
    <variation>G</variation>
    <location>
        <position position="186"/>
    </location>
</feature>
<feature type="strand" evidence="7">
    <location>
        <begin position="10"/>
        <end position="16"/>
    </location>
</feature>
<feature type="strand" evidence="8">
    <location>
        <begin position="18"/>
        <end position="20"/>
    </location>
</feature>
<feature type="helix" evidence="7">
    <location>
        <begin position="24"/>
        <end position="37"/>
    </location>
</feature>
<feature type="strand" evidence="7">
    <location>
        <begin position="42"/>
        <end position="48"/>
    </location>
</feature>
<feature type="helix" evidence="7">
    <location>
        <begin position="55"/>
        <end position="57"/>
    </location>
</feature>
<feature type="helix" evidence="7">
    <location>
        <begin position="60"/>
        <end position="63"/>
    </location>
</feature>
<feature type="strand" evidence="8">
    <location>
        <begin position="66"/>
        <end position="68"/>
    </location>
</feature>
<feature type="strand" evidence="8">
    <location>
        <begin position="74"/>
        <end position="76"/>
    </location>
</feature>
<feature type="helix" evidence="7">
    <location>
        <begin position="78"/>
        <end position="86"/>
    </location>
</feature>
<feature type="helix" evidence="7">
    <location>
        <begin position="92"/>
        <end position="94"/>
    </location>
</feature>
<feature type="strand" evidence="7">
    <location>
        <begin position="95"/>
        <end position="97"/>
    </location>
</feature>
<feature type="helix" evidence="7">
    <location>
        <begin position="98"/>
        <end position="110"/>
    </location>
</feature>
<feature type="turn" evidence="7">
    <location>
        <begin position="111"/>
        <end position="116"/>
    </location>
</feature>
<feature type="helix" evidence="7">
    <location>
        <begin position="121"/>
        <end position="135"/>
    </location>
</feature>
<feature type="strand" evidence="7">
    <location>
        <begin position="147"/>
        <end position="153"/>
    </location>
</feature>
<feature type="helix" evidence="7">
    <location>
        <begin position="163"/>
        <end position="176"/>
    </location>
</feature>
<feature type="turn" evidence="7">
    <location>
        <begin position="178"/>
        <end position="180"/>
    </location>
</feature>
<feature type="strand" evidence="7">
    <location>
        <begin position="181"/>
        <end position="188"/>
    </location>
</feature>
<feature type="turn" evidence="7">
    <location>
        <begin position="193"/>
        <end position="196"/>
    </location>
</feature>
<feature type="helix" evidence="7">
    <location>
        <begin position="201"/>
        <end position="212"/>
    </location>
</feature>
<feature type="strand" evidence="7">
    <location>
        <begin position="218"/>
        <end position="226"/>
    </location>
</feature>
<feature type="helix" evidence="7">
    <location>
        <begin position="230"/>
        <end position="240"/>
    </location>
</feature>
<feature type="helix" evidence="7">
    <location>
        <begin position="244"/>
        <end position="246"/>
    </location>
</feature>
<feature type="strand" evidence="7">
    <location>
        <begin position="247"/>
        <end position="251"/>
    </location>
</feature>
<feature type="helix" evidence="7">
    <location>
        <begin position="256"/>
        <end position="258"/>
    </location>
</feature>
<feature type="helix" evidence="7">
    <location>
        <begin position="259"/>
        <end position="265"/>
    </location>
</feature>
<feature type="helix" evidence="7">
    <location>
        <begin position="268"/>
        <end position="275"/>
    </location>
</feature>
<feature type="helix" evidence="7">
    <location>
        <begin position="286"/>
        <end position="296"/>
    </location>
</feature>
<feature type="strand" evidence="7">
    <location>
        <begin position="299"/>
        <end position="309"/>
    </location>
</feature>
<feature type="helix" evidence="7">
    <location>
        <begin position="314"/>
        <end position="317"/>
    </location>
</feature>
<feature type="helix" evidence="7">
    <location>
        <begin position="318"/>
        <end position="330"/>
    </location>
</feature>
<feature type="strand" evidence="7">
    <location>
        <begin position="333"/>
        <end position="341"/>
    </location>
</feature>
<feature type="helix" evidence="7">
    <location>
        <begin position="342"/>
        <end position="345"/>
    </location>
</feature>
<feature type="helix" evidence="7">
    <location>
        <begin position="348"/>
        <end position="355"/>
    </location>
</feature>
<feature type="strand" evidence="7">
    <location>
        <begin position="359"/>
        <end position="363"/>
    </location>
</feature>
<feature type="helix" evidence="7">
    <location>
        <begin position="373"/>
        <end position="385"/>
    </location>
</feature>
<feature type="strand" evidence="7">
    <location>
        <begin position="389"/>
        <end position="392"/>
    </location>
</feature>
<feature type="helix" evidence="7">
    <location>
        <begin position="394"/>
        <end position="406"/>
    </location>
</feature>
<feature type="turn" evidence="7">
    <location>
        <begin position="415"/>
        <end position="417"/>
    </location>
</feature>
<feature type="strand" evidence="7">
    <location>
        <begin position="424"/>
        <end position="428"/>
    </location>
</feature>
<feature type="strand" evidence="7">
    <location>
        <begin position="447"/>
        <end position="455"/>
    </location>
</feature>
<feature type="helix" evidence="7">
    <location>
        <begin position="460"/>
        <end position="465"/>
    </location>
</feature>
<feature type="strand" evidence="7">
    <location>
        <begin position="467"/>
        <end position="480"/>
    </location>
</feature>
<feature type="helix" evidence="7">
    <location>
        <begin position="482"/>
        <end position="484"/>
    </location>
</feature>
<feature type="helix" evidence="7">
    <location>
        <begin position="485"/>
        <end position="488"/>
    </location>
</feature>
<feature type="helix" evidence="7">
    <location>
        <begin position="489"/>
        <end position="491"/>
    </location>
</feature>
<feature type="strand" evidence="7">
    <location>
        <begin position="494"/>
        <end position="498"/>
    </location>
</feature>
<feature type="strand" evidence="7">
    <location>
        <begin position="504"/>
        <end position="509"/>
    </location>
</feature>
<feature type="turn" evidence="7">
    <location>
        <begin position="512"/>
        <end position="514"/>
    </location>
</feature>
<feature type="strand" evidence="7">
    <location>
        <begin position="518"/>
        <end position="523"/>
    </location>
</feature>
<feature type="helix" evidence="7">
    <location>
        <begin position="525"/>
        <end position="528"/>
    </location>
</feature>
<feature type="helix" evidence="7">
    <location>
        <begin position="536"/>
        <end position="551"/>
    </location>
</feature>
<protein>
    <recommendedName>
        <fullName evidence="2">CTP synthase</fullName>
        <ecNumber evidence="2">6.3.4.2</ecNumber>
    </recommendedName>
    <alternativeName>
        <fullName evidence="2">Cytidine 5'-triphosphate synthase</fullName>
    </alternativeName>
    <alternativeName>
        <fullName evidence="2">Cytidine triphosphate synthetase</fullName>
        <shortName evidence="2 5">CTP synthetase</shortName>
        <shortName evidence="2">CTPS</shortName>
    </alternativeName>
    <alternativeName>
        <fullName evidence="2">UTP--ammonia ligase</fullName>
    </alternativeName>
</protein>
<name>PYRG_MYCTU</name>
<reference key="1">
    <citation type="journal article" date="1998" name="Nature">
        <title>Deciphering the biology of Mycobacterium tuberculosis from the complete genome sequence.</title>
        <authorList>
            <person name="Cole S.T."/>
            <person name="Brosch R."/>
            <person name="Parkhill J."/>
            <person name="Garnier T."/>
            <person name="Churcher C.M."/>
            <person name="Harris D.E."/>
            <person name="Gordon S.V."/>
            <person name="Eiglmeier K."/>
            <person name="Gas S."/>
            <person name="Barry C.E. III"/>
            <person name="Tekaia F."/>
            <person name="Badcock K."/>
            <person name="Basham D."/>
            <person name="Brown D."/>
            <person name="Chillingworth T."/>
            <person name="Connor R."/>
            <person name="Davies R.M."/>
            <person name="Devlin K."/>
            <person name="Feltwell T."/>
            <person name="Gentles S."/>
            <person name="Hamlin N."/>
            <person name="Holroyd S."/>
            <person name="Hornsby T."/>
            <person name="Jagels K."/>
            <person name="Krogh A."/>
            <person name="McLean J."/>
            <person name="Moule S."/>
            <person name="Murphy L.D."/>
            <person name="Oliver S."/>
            <person name="Osborne J."/>
            <person name="Quail M.A."/>
            <person name="Rajandream M.A."/>
            <person name="Rogers J."/>
            <person name="Rutter S."/>
            <person name="Seeger K."/>
            <person name="Skelton S."/>
            <person name="Squares S."/>
            <person name="Squares R."/>
            <person name="Sulston J.E."/>
            <person name="Taylor K."/>
            <person name="Whitehead S."/>
            <person name="Barrell B.G."/>
        </authorList>
    </citation>
    <scope>NUCLEOTIDE SEQUENCE [LARGE SCALE GENOMIC DNA]</scope>
    <source>
        <strain>ATCC 25618 / H37Rv</strain>
    </source>
</reference>
<reference key="2">
    <citation type="journal article" date="2011" name="Mol. Cell. Proteomics">
        <title>Proteogenomic analysis of Mycobacterium tuberculosis by high resolution mass spectrometry.</title>
        <authorList>
            <person name="Kelkar D.S."/>
            <person name="Kumar D."/>
            <person name="Kumar P."/>
            <person name="Balakrishnan L."/>
            <person name="Muthusamy B."/>
            <person name="Yadav A.K."/>
            <person name="Shrivastava P."/>
            <person name="Marimuthu A."/>
            <person name="Anand S."/>
            <person name="Sundaram H."/>
            <person name="Kingsbury R."/>
            <person name="Harsha H.C."/>
            <person name="Nair B."/>
            <person name="Prasad T.S."/>
            <person name="Chauhan D.S."/>
            <person name="Katoch K."/>
            <person name="Katoch V.M."/>
            <person name="Kumar P."/>
            <person name="Chaerkady R."/>
            <person name="Ramachandran S."/>
            <person name="Dash D."/>
            <person name="Pandey A."/>
        </authorList>
    </citation>
    <scope>IDENTIFICATION BY MASS SPECTROMETRY [LARGE SCALE ANALYSIS]</scope>
    <source>
        <strain>ATCC 25618 / H37Rv</strain>
    </source>
</reference>
<reference key="3">
    <citation type="journal article" date="2015" name="Chem. Biol.">
        <title>Thiophenecarboxamide derivatives activated by EthA kill Mycobacterium tuberculosis by inhibiting the CTP synthetase PyrG.</title>
        <authorList>
            <person name="Mori G."/>
            <person name="Chiarelli L.R."/>
            <person name="Esposito M."/>
            <person name="Makarov V."/>
            <person name="Bellinzoni M."/>
            <person name="Hartkoorn R.C."/>
            <person name="Degiacomi G."/>
            <person name="Boldrin F."/>
            <person name="Ekins S."/>
            <person name="de Jesus Lopes Ribeiro A.L."/>
            <person name="Marino L.B."/>
            <person name="Centarova I."/>
            <person name="Svetlikova Z."/>
            <person name="Blasko J."/>
            <person name="Kazakova E."/>
            <person name="Lepioshkin A."/>
            <person name="Barilone N."/>
            <person name="Zanoni G."/>
            <person name="Porta A."/>
            <person name="Fondi M."/>
            <person name="Fani R."/>
            <person name="Baulard A.R."/>
            <person name="Mikusova K."/>
            <person name="Alzari P.M."/>
            <person name="Manganelli R."/>
            <person name="de Carvalho L.P."/>
            <person name="Riccardi G."/>
            <person name="Cole S.T."/>
            <person name="Pasca M.R."/>
        </authorList>
    </citation>
    <scope>X-RAY CRYSTALLOGRAPHY (1.99 ANGSTROMS) OF APOENZYME AND IN COMPLEXES WITH UTP; AMP-PCP AND OXONORLEUCINE</scope>
    <scope>FUNCTION</scope>
    <scope>CATALYTIC ACTIVITY</scope>
    <scope>BIOPHYSICOCHEMICAL PROPERTIES</scope>
    <scope>ACTIVITY REGULATION</scope>
    <scope>SUBUNIT</scope>
    <scope>MUTAGENESIS OF VAL-186</scope>
    <scope>ACTIVE SITE</scope>
    <source>
        <strain>H37Rv</strain>
    </source>
</reference>
<dbReference type="EC" id="6.3.4.2" evidence="2"/>
<dbReference type="EMBL" id="AL123456">
    <property type="protein sequence ID" value="CCP44464.1"/>
    <property type="molecule type" value="Genomic_DNA"/>
</dbReference>
<dbReference type="PIR" id="B70503">
    <property type="entry name" value="B70503"/>
</dbReference>
<dbReference type="RefSeq" id="NP_216215.1">
    <property type="nucleotide sequence ID" value="NC_000962.3"/>
</dbReference>
<dbReference type="RefSeq" id="WP_003408396.1">
    <property type="nucleotide sequence ID" value="NZ_NVQJ01000010.1"/>
</dbReference>
<dbReference type="PDB" id="4ZDI">
    <property type="method" value="X-ray"/>
    <property type="resolution" value="3.52 A"/>
    <property type="chains" value="A/B/C/D/E/F/G/H=1-586"/>
</dbReference>
<dbReference type="PDB" id="4ZDJ">
    <property type="method" value="X-ray"/>
    <property type="resolution" value="1.99 A"/>
    <property type="chains" value="A=1-586"/>
</dbReference>
<dbReference type="PDB" id="4ZDK">
    <property type="method" value="X-ray"/>
    <property type="resolution" value="3.49 A"/>
    <property type="chains" value="A/B=1-586"/>
</dbReference>
<dbReference type="PDBsum" id="4ZDI"/>
<dbReference type="PDBsum" id="4ZDJ"/>
<dbReference type="PDBsum" id="4ZDK"/>
<dbReference type="SMR" id="P9WHK7"/>
<dbReference type="FunCoup" id="P9WHK7">
    <property type="interactions" value="488"/>
</dbReference>
<dbReference type="STRING" id="83332.Rv1699"/>
<dbReference type="PaxDb" id="83332-Rv1699"/>
<dbReference type="DNASU" id="885048"/>
<dbReference type="GeneID" id="885048"/>
<dbReference type="KEGG" id="mtu:Rv1699"/>
<dbReference type="KEGG" id="mtv:RVBD_1699"/>
<dbReference type="TubercuList" id="Rv1699"/>
<dbReference type="eggNOG" id="COG0504">
    <property type="taxonomic scope" value="Bacteria"/>
</dbReference>
<dbReference type="InParanoid" id="P9WHK7"/>
<dbReference type="OrthoDB" id="9801107at2"/>
<dbReference type="PhylomeDB" id="P9WHK7"/>
<dbReference type="SABIO-RK" id="P9WHK7"/>
<dbReference type="UniPathway" id="UPA00159">
    <property type="reaction ID" value="UER00277"/>
</dbReference>
<dbReference type="EvolutionaryTrace" id="P9WHK7"/>
<dbReference type="Proteomes" id="UP000001584">
    <property type="component" value="Chromosome"/>
</dbReference>
<dbReference type="GO" id="GO:0005829">
    <property type="term" value="C:cytosol"/>
    <property type="evidence" value="ECO:0000318"/>
    <property type="project" value="GO_Central"/>
</dbReference>
<dbReference type="GO" id="GO:0005886">
    <property type="term" value="C:plasma membrane"/>
    <property type="evidence" value="ECO:0007005"/>
    <property type="project" value="MTBBASE"/>
</dbReference>
<dbReference type="GO" id="GO:0005524">
    <property type="term" value="F:ATP binding"/>
    <property type="evidence" value="ECO:0007669"/>
    <property type="project" value="UniProtKB-KW"/>
</dbReference>
<dbReference type="GO" id="GO:0003883">
    <property type="term" value="F:CTP synthase activity"/>
    <property type="evidence" value="ECO:0000318"/>
    <property type="project" value="GO_Central"/>
</dbReference>
<dbReference type="GO" id="GO:0004359">
    <property type="term" value="F:glutaminase activity"/>
    <property type="evidence" value="ECO:0007669"/>
    <property type="project" value="RHEA"/>
</dbReference>
<dbReference type="GO" id="GO:0042802">
    <property type="term" value="F:identical protein binding"/>
    <property type="evidence" value="ECO:0000318"/>
    <property type="project" value="GO_Central"/>
</dbReference>
<dbReference type="GO" id="GO:0046872">
    <property type="term" value="F:metal ion binding"/>
    <property type="evidence" value="ECO:0007669"/>
    <property type="project" value="UniProtKB-KW"/>
</dbReference>
<dbReference type="GO" id="GO:0044210">
    <property type="term" value="P:'de novo' CTP biosynthetic process"/>
    <property type="evidence" value="ECO:0007669"/>
    <property type="project" value="UniProtKB-UniRule"/>
</dbReference>
<dbReference type="GO" id="GO:0006241">
    <property type="term" value="P:CTP biosynthetic process"/>
    <property type="evidence" value="ECO:0000318"/>
    <property type="project" value="GO_Central"/>
</dbReference>
<dbReference type="GO" id="GO:0019856">
    <property type="term" value="P:pyrimidine nucleobase biosynthetic process"/>
    <property type="evidence" value="ECO:0000318"/>
    <property type="project" value="GO_Central"/>
</dbReference>
<dbReference type="CDD" id="cd03113">
    <property type="entry name" value="CTPS_N"/>
    <property type="match status" value="1"/>
</dbReference>
<dbReference type="CDD" id="cd01746">
    <property type="entry name" value="GATase1_CTP_Synthase"/>
    <property type="match status" value="1"/>
</dbReference>
<dbReference type="FunFam" id="3.40.50.300:FF:000009">
    <property type="entry name" value="CTP synthase"/>
    <property type="match status" value="1"/>
</dbReference>
<dbReference type="FunFam" id="3.40.50.880:FF:000002">
    <property type="entry name" value="CTP synthase"/>
    <property type="match status" value="1"/>
</dbReference>
<dbReference type="Gene3D" id="3.40.50.880">
    <property type="match status" value="1"/>
</dbReference>
<dbReference type="Gene3D" id="3.40.50.300">
    <property type="entry name" value="P-loop containing nucleotide triphosphate hydrolases"/>
    <property type="match status" value="1"/>
</dbReference>
<dbReference type="HAMAP" id="MF_01227">
    <property type="entry name" value="PyrG"/>
    <property type="match status" value="1"/>
</dbReference>
<dbReference type="InterPro" id="IPR029062">
    <property type="entry name" value="Class_I_gatase-like"/>
</dbReference>
<dbReference type="InterPro" id="IPR004468">
    <property type="entry name" value="CTP_synthase"/>
</dbReference>
<dbReference type="InterPro" id="IPR017456">
    <property type="entry name" value="CTP_synthase_N"/>
</dbReference>
<dbReference type="InterPro" id="IPR017926">
    <property type="entry name" value="GATASE"/>
</dbReference>
<dbReference type="InterPro" id="IPR033828">
    <property type="entry name" value="GATase1_CTP_Synthase"/>
</dbReference>
<dbReference type="InterPro" id="IPR027417">
    <property type="entry name" value="P-loop_NTPase"/>
</dbReference>
<dbReference type="NCBIfam" id="NF003792">
    <property type="entry name" value="PRK05380.1"/>
    <property type="match status" value="1"/>
</dbReference>
<dbReference type="NCBIfam" id="TIGR00337">
    <property type="entry name" value="PyrG"/>
    <property type="match status" value="1"/>
</dbReference>
<dbReference type="PANTHER" id="PTHR11550">
    <property type="entry name" value="CTP SYNTHASE"/>
    <property type="match status" value="1"/>
</dbReference>
<dbReference type="PANTHER" id="PTHR11550:SF0">
    <property type="entry name" value="CTP SYNTHASE-RELATED"/>
    <property type="match status" value="1"/>
</dbReference>
<dbReference type="Pfam" id="PF06418">
    <property type="entry name" value="CTP_synth_N"/>
    <property type="match status" value="1"/>
</dbReference>
<dbReference type="Pfam" id="PF00117">
    <property type="entry name" value="GATase"/>
    <property type="match status" value="1"/>
</dbReference>
<dbReference type="SUPFAM" id="SSF52317">
    <property type="entry name" value="Class I glutamine amidotransferase-like"/>
    <property type="match status" value="1"/>
</dbReference>
<dbReference type="SUPFAM" id="SSF52540">
    <property type="entry name" value="P-loop containing nucleoside triphosphate hydrolases"/>
    <property type="match status" value="1"/>
</dbReference>
<dbReference type="PROSITE" id="PS51273">
    <property type="entry name" value="GATASE_TYPE_1"/>
    <property type="match status" value="1"/>
</dbReference>
<accession>P9WHK7</accession>
<accession>L0TA54</accession>
<accession>P0A5U2</accession>
<accession>P96351</accession>
<keyword id="KW-0002">3D-structure</keyword>
<keyword id="KW-0067">ATP-binding</keyword>
<keyword id="KW-0315">Glutamine amidotransferase</keyword>
<keyword id="KW-0436">Ligase</keyword>
<keyword id="KW-0460">Magnesium</keyword>
<keyword id="KW-0479">Metal-binding</keyword>
<keyword id="KW-0547">Nucleotide-binding</keyword>
<keyword id="KW-0665">Pyrimidine biosynthesis</keyword>
<keyword id="KW-1185">Reference proteome</keyword>
<sequence length="586" mass="63635">MRKHPQTATKHLFVSGGVASSLGKGLTASSLGQLLTARGLHVTMQKLDPYLNVDPGTMNPFQHGEVFVTEDGAETDLDVGHYERFLDRNLPGSANVTTGQVYSTVIAKERRGEYLGDTVQVIPHITDEIKRRILAMAQPDADGNRPDVVITEIGGTVGDIESQPFLEAARQVRHYLGREDVFFLHVSLVPYLAPSGELKTKPTQHSVAALRSIGITPDALILRCDRDVPEALKNKIALMCDVDIDGVISTPDAPSIYDIPKVLHREELDAFVVRRLNLPFRDVDWTEWDDLLRRVHEPHETVRIALVGKYVELSDAYLSVAEALRAGGFKHRAKVEICWVASDGCETTSGAAAALGDVHGVLIPGGFGIRGIEGKIGAIAYARARGLPVLGLCLGLQCIVIEAARSVGLTNANSAEFDPDTPDPVIATMPDQEEIVAGEADLGGTMRLGSYPAVLEPDSVVAQAYQTTQVSERHRHRYEVNNAYRDKIAESGLRFSGTSPDGHLVEFVEYPPDRHPFVVGTQAHPELKSRPTRPHPLFVAFVGAAIDYKAGELLPVEIPEIPEHTPNGSSHRDGVGQPLPEPASRG</sequence>
<comment type="function">
    <text evidence="2 4">Catalyzes the ATP-dependent amination of UTP to CTP with either L-glutamine or ammonia as the source of nitrogen. Is essential for M.tuberculosis growth in vitro and ex vivo (PubMed:26097035). Regulates intracellular CTP levels through interactions with the four ribonucleotide triphosphates (By similarity).</text>
</comment>
<comment type="catalytic activity">
    <reaction evidence="2 4">
        <text>UTP + L-glutamine + ATP + H2O = CTP + L-glutamate + ADP + phosphate + 2 H(+)</text>
        <dbReference type="Rhea" id="RHEA:26426"/>
        <dbReference type="ChEBI" id="CHEBI:15377"/>
        <dbReference type="ChEBI" id="CHEBI:15378"/>
        <dbReference type="ChEBI" id="CHEBI:29985"/>
        <dbReference type="ChEBI" id="CHEBI:30616"/>
        <dbReference type="ChEBI" id="CHEBI:37563"/>
        <dbReference type="ChEBI" id="CHEBI:43474"/>
        <dbReference type="ChEBI" id="CHEBI:46398"/>
        <dbReference type="ChEBI" id="CHEBI:58359"/>
        <dbReference type="ChEBI" id="CHEBI:456216"/>
        <dbReference type="EC" id="6.3.4.2"/>
    </reaction>
</comment>
<comment type="catalytic activity">
    <reaction evidence="2">
        <text>L-glutamine + H2O = L-glutamate + NH4(+)</text>
        <dbReference type="Rhea" id="RHEA:15889"/>
        <dbReference type="ChEBI" id="CHEBI:15377"/>
        <dbReference type="ChEBI" id="CHEBI:28938"/>
        <dbReference type="ChEBI" id="CHEBI:29985"/>
        <dbReference type="ChEBI" id="CHEBI:58359"/>
    </reaction>
</comment>
<comment type="catalytic activity">
    <reaction evidence="2">
        <text>UTP + NH4(+) + ATP = CTP + ADP + phosphate + 2 H(+)</text>
        <dbReference type="Rhea" id="RHEA:16597"/>
        <dbReference type="ChEBI" id="CHEBI:15378"/>
        <dbReference type="ChEBI" id="CHEBI:28938"/>
        <dbReference type="ChEBI" id="CHEBI:30616"/>
        <dbReference type="ChEBI" id="CHEBI:37563"/>
        <dbReference type="ChEBI" id="CHEBI:43474"/>
        <dbReference type="ChEBI" id="CHEBI:46398"/>
        <dbReference type="ChEBI" id="CHEBI:456216"/>
    </reaction>
</comment>
<comment type="activity regulation">
    <text evidence="2 4">Allosterically activated by GTP, when glutamine is the substrate; GTP has no effect on the reaction when ammonia is the substrate. The allosteric effector GTP functions by stabilizing the protein conformation that binds the tetrahedral intermediate(s) formed during glutamine hydrolysis. Inhibited by the product CTP, via allosteric rather than competitive inhibition (By similarity). Is inhibited by the EthA-activated metabolites of compounds 7947882 (5-methyl-N-(4-nitrophenyl)thiophene-2-carboxamide) and 7904688 (3-phenyl-N-[(4-piperidin-1-ylphenyl)carbamothioyl]propanamide), that have been shown to have anti-tubercular activity against M.tuberculosis in its replicating, non-replicating, and intracellular states; active metabolites of 7947882 correspond to the S-dioxide and S-monoxide derivatives (PubMed:26097035). One active metabolite was shown to behave as a competitive inhibitor toward the ATP-binding site of PyrG (PubMed:26097035). Direct inhibition of PyrG decreases CTP levels, leading to disruption of the nucleotide metabolic network, characterized by increased levels of several intermediates in the biosynthesis of pyrimidines and purines (PubMed:26097035).</text>
</comment>
<comment type="biophysicochemical properties">
    <kinetics>
        <KM evidence="4">0.18 mM for ATP</KM>
        <KM evidence="4">0.14 mM for UTP</KM>
        <text evidence="4">kcat is 22.9 sec(-1).</text>
    </kinetics>
</comment>
<comment type="pathway">
    <text evidence="2">Pyrimidine metabolism; CTP biosynthesis via de novo pathway; CTP from UDP: step 2/2.</text>
</comment>
<comment type="subunit">
    <text evidence="2 4">Homotetramer.</text>
</comment>
<comment type="miscellaneous">
    <text evidence="2">CTPSs have evolved a hybrid strategy for distinguishing between UTP and CTP. The overlapping regions of the product feedback inhibitory and substrate sites recognize a common feature in both compounds, the triphosphate moiety. To differentiate isosteric substrate and product pyrimidine rings, an additional pocket far from the expected kinase/ligase catalytic site, specifically recognizes the cytosine and ribose portions of the product inhibitor.</text>
</comment>
<comment type="similarity">
    <text evidence="2">Belongs to the CTP synthase family.</text>
</comment>
<gene>
    <name type="primary">pyrG</name>
    <name type="ordered locus">Rv1699</name>
    <name type="ORF">MTCI125.21</name>
</gene>
<proteinExistence type="evidence at protein level"/>
<organism>
    <name type="scientific">Mycobacterium tuberculosis (strain ATCC 25618 / H37Rv)</name>
    <dbReference type="NCBI Taxonomy" id="83332"/>
    <lineage>
        <taxon>Bacteria</taxon>
        <taxon>Bacillati</taxon>
        <taxon>Actinomycetota</taxon>
        <taxon>Actinomycetes</taxon>
        <taxon>Mycobacteriales</taxon>
        <taxon>Mycobacteriaceae</taxon>
        <taxon>Mycobacterium</taxon>
        <taxon>Mycobacterium tuberculosis complex</taxon>
    </lineage>
</organism>
<evidence type="ECO:0000250" key="1">
    <source>
        <dbReference type="UniProtKB" id="P0A7E5"/>
    </source>
</evidence>
<evidence type="ECO:0000255" key="2">
    <source>
        <dbReference type="HAMAP-Rule" id="MF_01227"/>
    </source>
</evidence>
<evidence type="ECO:0000256" key="3">
    <source>
        <dbReference type="SAM" id="MobiDB-lite"/>
    </source>
</evidence>
<evidence type="ECO:0000269" key="4">
    <source>
    </source>
</evidence>
<evidence type="ECO:0000303" key="5">
    <source>
    </source>
</evidence>
<evidence type="ECO:0000305" key="6">
    <source>
    </source>
</evidence>
<evidence type="ECO:0007829" key="7">
    <source>
        <dbReference type="PDB" id="4ZDJ"/>
    </source>
</evidence>
<evidence type="ECO:0007829" key="8">
    <source>
        <dbReference type="PDB" id="4ZDK"/>
    </source>
</evidence>